<protein>
    <recommendedName>
        <fullName>Probable helicase with zinc finger domain</fullName>
        <ecNumber>3.6.4.-</ecNumber>
    </recommendedName>
    <alternativeName>
        <fullName>Down-regulated in human cancers protein</fullName>
    </alternativeName>
</protein>
<accession>P42694</accession>
<accession>I6L9H4</accession>
<feature type="chain" id="PRO_0000089185" description="Probable helicase with zinc finger domain">
    <location>
        <begin position="1"/>
        <end position="1942"/>
    </location>
</feature>
<feature type="zinc finger region" description="C3H1-type" evidence="3">
    <location>
        <begin position="178"/>
        <end position="206"/>
    </location>
</feature>
<feature type="region of interest" description="Disordered" evidence="4">
    <location>
        <begin position="1117"/>
        <end position="1141"/>
    </location>
</feature>
<feature type="region of interest" description="Disordered" evidence="4">
    <location>
        <begin position="1246"/>
        <end position="1345"/>
    </location>
</feature>
<feature type="region of interest" description="Disordered" evidence="4">
    <location>
        <begin position="1386"/>
        <end position="1429"/>
    </location>
</feature>
<feature type="region of interest" description="Disordered" evidence="4">
    <location>
        <begin position="1527"/>
        <end position="1552"/>
    </location>
</feature>
<feature type="region of interest" description="Disordered" evidence="4">
    <location>
        <begin position="1608"/>
        <end position="1637"/>
    </location>
</feature>
<feature type="region of interest" description="Disordered" evidence="4">
    <location>
        <begin position="1729"/>
        <end position="1779"/>
    </location>
</feature>
<feature type="region of interest" description="Disordered" evidence="4">
    <location>
        <begin position="1792"/>
        <end position="1843"/>
    </location>
</feature>
<feature type="region of interest" description="Disordered" evidence="4">
    <location>
        <begin position="1870"/>
        <end position="1942"/>
    </location>
</feature>
<feature type="short sequence motif" description="DEAA box">
    <location>
        <begin position="794"/>
        <end position="797"/>
    </location>
</feature>
<feature type="compositionally biased region" description="Polar residues" evidence="4">
    <location>
        <begin position="1117"/>
        <end position="1127"/>
    </location>
</feature>
<feature type="compositionally biased region" description="Basic and acidic residues" evidence="4">
    <location>
        <begin position="1268"/>
        <end position="1281"/>
    </location>
</feature>
<feature type="compositionally biased region" description="Basic and acidic residues" evidence="4">
    <location>
        <begin position="1292"/>
        <end position="1308"/>
    </location>
</feature>
<feature type="compositionally biased region" description="Low complexity" evidence="4">
    <location>
        <begin position="1399"/>
        <end position="1412"/>
    </location>
</feature>
<feature type="compositionally biased region" description="Low complexity" evidence="4">
    <location>
        <begin position="1623"/>
        <end position="1636"/>
    </location>
</feature>
<feature type="compositionally biased region" description="Low complexity" evidence="4">
    <location>
        <begin position="1731"/>
        <end position="1745"/>
    </location>
</feature>
<feature type="compositionally biased region" description="Polar residues" evidence="4">
    <location>
        <begin position="1761"/>
        <end position="1779"/>
    </location>
</feature>
<feature type="compositionally biased region" description="Polar residues" evidence="4">
    <location>
        <begin position="1792"/>
        <end position="1825"/>
    </location>
</feature>
<feature type="compositionally biased region" description="Low complexity" evidence="4">
    <location>
        <begin position="1876"/>
        <end position="1888"/>
    </location>
</feature>
<feature type="compositionally biased region" description="Low complexity" evidence="4">
    <location>
        <begin position="1920"/>
        <end position="1942"/>
    </location>
</feature>
<feature type="binding site" evidence="2">
    <location>
        <begin position="668"/>
        <end position="675"/>
    </location>
    <ligand>
        <name>ATP</name>
        <dbReference type="ChEBI" id="CHEBI:30616"/>
    </ligand>
</feature>
<feature type="modified residue" description="Phosphoserine" evidence="11">
    <location>
        <position position="248"/>
    </location>
</feature>
<feature type="modified residue" description="Phosphothreonine" evidence="11">
    <location>
        <position position="1163"/>
    </location>
</feature>
<feature type="modified residue" description="Omega-N-methylarginine" evidence="12">
    <location>
        <position position="1245"/>
    </location>
</feature>
<feature type="modified residue" description="Phosphoserine" evidence="10 11">
    <location>
        <position position="1614"/>
    </location>
</feature>
<feature type="modified residue" description="Phosphoserine" evidence="11">
    <location>
        <position position="1645"/>
    </location>
</feature>
<feature type="modified residue" description="Phosphoserine" evidence="9 11">
    <location>
        <position position="1738"/>
    </location>
</feature>
<feature type="modified residue" description="Phosphoserine" evidence="11">
    <location>
        <position position="1741"/>
    </location>
</feature>
<feature type="modified residue" description="Phosphoserine" evidence="9">
    <location>
        <position position="1766"/>
    </location>
</feature>
<feature type="splice variant" id="VSP_054493" description="In isoform 2." evidence="7">
    <original>T</original>
    <variation>TS</variation>
    <location>
        <position position="691"/>
    </location>
</feature>
<feature type="splice variant" id="VSP_054494" description="In isoform 2." evidence="7">
    <original>GKSLHHTQNDHFQNDGIVQPNPSVLIGNPIRAY</original>
    <variation>VKPLLMKLKRLKGENFAEVPKVYWDASYFKCWN</variation>
    <location>
        <begin position="1130"/>
        <end position="1162"/>
    </location>
</feature>
<feature type="splice variant" id="VSP_054495" description="In isoform 2." evidence="7">
    <location>
        <begin position="1163"/>
        <end position="1942"/>
    </location>
</feature>
<feature type="sequence variant" id="VAR_057273" description="In dbSNP:rs2302669.">
    <original>C</original>
    <variation>R</variation>
    <location>
        <position position="48"/>
    </location>
</feature>
<feature type="sequence variant" id="VAR_057274" description="In dbSNP:rs8080100.">
    <original>V</original>
    <variation>M</variation>
    <location>
        <position position="74"/>
    </location>
</feature>
<feature type="sequence variant" id="VAR_057275" description="In dbSNP:rs11653020.">
    <original>A</original>
    <variation>V</variation>
    <location>
        <position position="1530"/>
    </location>
</feature>
<evidence type="ECO:0000250" key="1"/>
<evidence type="ECO:0000255" key="2"/>
<evidence type="ECO:0000255" key="3">
    <source>
        <dbReference type="PROSITE-ProRule" id="PRU00723"/>
    </source>
</evidence>
<evidence type="ECO:0000256" key="4">
    <source>
        <dbReference type="SAM" id="MobiDB-lite"/>
    </source>
</evidence>
<evidence type="ECO:0000269" key="5">
    <source>
    </source>
</evidence>
<evidence type="ECO:0000269" key="6">
    <source>
    </source>
</evidence>
<evidence type="ECO:0000303" key="7">
    <source>
    </source>
</evidence>
<evidence type="ECO:0000305" key="8"/>
<evidence type="ECO:0007744" key="9">
    <source>
    </source>
</evidence>
<evidence type="ECO:0007744" key="10">
    <source>
    </source>
</evidence>
<evidence type="ECO:0007744" key="11">
    <source>
    </source>
</evidence>
<evidence type="ECO:0007744" key="12">
    <source>
    </source>
</evidence>
<organism>
    <name type="scientific">Homo sapiens</name>
    <name type="common">Human</name>
    <dbReference type="NCBI Taxonomy" id="9606"/>
    <lineage>
        <taxon>Eukaryota</taxon>
        <taxon>Metazoa</taxon>
        <taxon>Chordata</taxon>
        <taxon>Craniata</taxon>
        <taxon>Vertebrata</taxon>
        <taxon>Euteleostomi</taxon>
        <taxon>Mammalia</taxon>
        <taxon>Eutheria</taxon>
        <taxon>Euarchontoglires</taxon>
        <taxon>Primates</taxon>
        <taxon>Haplorrhini</taxon>
        <taxon>Catarrhini</taxon>
        <taxon>Hominidae</taxon>
        <taxon>Homo</taxon>
    </lineage>
</organism>
<comment type="function">
    <text>May act as a helicase that plays a role in RNA metabolism in multiple tissues and organs within the developing embryo.</text>
</comment>
<comment type="subunit">
    <text evidence="1 6">Interacts with SMYD2 (By similarity). Interacts with POLR2A. Interacts with SMYD3; the interaction may bridge SMYD3 and RNA polymerase II.</text>
</comment>
<comment type="interaction">
    <interactant intactId="EBI-1210654">
        <id>P42694</id>
    </interactant>
    <interactant intactId="EBI-1805738">
        <id>Q8IWL3</id>
        <label>HSCB</label>
    </interactant>
    <organismsDiffer>false</organismsDiffer>
    <experiments>4</experiments>
</comment>
<comment type="interaction">
    <interactant intactId="EBI-1210654">
        <id>P42694</id>
    </interactant>
    <interactant intactId="EBI-296739">
        <id>P63244</id>
        <label>RACK1</label>
    </interactant>
    <organismsDiffer>false</organismsDiffer>
    <experiments>5</experiments>
</comment>
<comment type="subcellular location">
    <subcellularLocation>
        <location evidence="8">Nucleus</location>
    </subcellularLocation>
</comment>
<comment type="alternative products">
    <event type="alternative splicing"/>
    <isoform>
        <id>P42694-1</id>
        <name>1</name>
        <sequence type="displayed"/>
    </isoform>
    <isoform>
        <id>P42694-2</id>
        <name>2</name>
        <sequence type="described" ref="VSP_054493 VSP_054494 VSP_054495"/>
    </isoform>
</comment>
<comment type="tissue specificity">
    <text evidence="5">Expressed predominantly in thymus and brain. Expression is down-regulated in 28 of 95 tested cancer cell lines.</text>
</comment>
<comment type="similarity">
    <text evidence="8">Belongs to the DNA2/NAM7 helicase family.</text>
</comment>
<comment type="sequence caution" evidence="8">
    <conflict type="erroneous initiation">
        <sequence resource="EMBL-CDS" id="BAA06147"/>
    </conflict>
</comment>
<name>HELZ_HUMAN</name>
<proteinExistence type="evidence at protein level"/>
<keyword id="KW-0025">Alternative splicing</keyword>
<keyword id="KW-0067">ATP-binding</keyword>
<keyword id="KW-0347">Helicase</keyword>
<keyword id="KW-0378">Hydrolase</keyword>
<keyword id="KW-0479">Metal-binding</keyword>
<keyword id="KW-0488">Methylation</keyword>
<keyword id="KW-0547">Nucleotide-binding</keyword>
<keyword id="KW-0539">Nucleus</keyword>
<keyword id="KW-0597">Phosphoprotein</keyword>
<keyword id="KW-1267">Proteomics identification</keyword>
<keyword id="KW-1185">Reference proteome</keyword>
<keyword id="KW-0862">Zinc</keyword>
<keyword id="KW-0863">Zinc-finger</keyword>
<gene>
    <name type="primary">HELZ</name>
    <name type="synonym">DRHC</name>
    <name type="synonym">KIAA0054</name>
</gene>
<reference key="1">
    <citation type="journal article" date="1994" name="DNA Res.">
        <title>Prediction of the coding sequences of unidentified human genes. II. The coding sequences of 40 new genes (KIAA0041-KIAA0080) deduced by analysis of cDNA clones from human cell line KG-1.</title>
        <authorList>
            <person name="Nomura N."/>
            <person name="Nagase T."/>
            <person name="Miyajima N."/>
            <person name="Sazuka T."/>
            <person name="Tanaka A."/>
            <person name="Sato S."/>
            <person name="Seki N."/>
            <person name="Kawarabayasi Y."/>
            <person name="Ishikawa K."/>
            <person name="Tabata S."/>
        </authorList>
    </citation>
    <scope>NUCLEOTIDE SEQUENCE [LARGE SCALE MRNA] (ISOFORM 1)</scope>
    <source>
        <tissue>Bone marrow</tissue>
    </source>
</reference>
<reference key="2">
    <citation type="journal article" date="2006" name="Nature">
        <title>DNA sequence of human chromosome 17 and analysis of rearrangement in the human lineage.</title>
        <authorList>
            <person name="Zody M.C."/>
            <person name="Garber M."/>
            <person name="Adams D.J."/>
            <person name="Sharpe T."/>
            <person name="Harrow J."/>
            <person name="Lupski J.R."/>
            <person name="Nicholson C."/>
            <person name="Searle S.M."/>
            <person name="Wilming L."/>
            <person name="Young S.K."/>
            <person name="Abouelleil A."/>
            <person name="Allen N.R."/>
            <person name="Bi W."/>
            <person name="Bloom T."/>
            <person name="Borowsky M.L."/>
            <person name="Bugalter B.E."/>
            <person name="Butler J."/>
            <person name="Chang J.L."/>
            <person name="Chen C.-K."/>
            <person name="Cook A."/>
            <person name="Corum B."/>
            <person name="Cuomo C.A."/>
            <person name="de Jong P.J."/>
            <person name="DeCaprio D."/>
            <person name="Dewar K."/>
            <person name="FitzGerald M."/>
            <person name="Gilbert J."/>
            <person name="Gibson R."/>
            <person name="Gnerre S."/>
            <person name="Goldstein S."/>
            <person name="Grafham D.V."/>
            <person name="Grocock R."/>
            <person name="Hafez N."/>
            <person name="Hagopian D.S."/>
            <person name="Hart E."/>
            <person name="Norman C.H."/>
            <person name="Humphray S."/>
            <person name="Jaffe D.B."/>
            <person name="Jones M."/>
            <person name="Kamal M."/>
            <person name="Khodiyar V.K."/>
            <person name="LaButti K."/>
            <person name="Laird G."/>
            <person name="Lehoczky J."/>
            <person name="Liu X."/>
            <person name="Lokyitsang T."/>
            <person name="Loveland J."/>
            <person name="Lui A."/>
            <person name="Macdonald P."/>
            <person name="Major J.E."/>
            <person name="Matthews L."/>
            <person name="Mauceli E."/>
            <person name="McCarroll S.A."/>
            <person name="Mihalev A.H."/>
            <person name="Mudge J."/>
            <person name="Nguyen C."/>
            <person name="Nicol R."/>
            <person name="O'Leary S.B."/>
            <person name="Osoegawa K."/>
            <person name="Schwartz D.C."/>
            <person name="Shaw-Smith C."/>
            <person name="Stankiewicz P."/>
            <person name="Steward C."/>
            <person name="Swarbreck D."/>
            <person name="Venkataraman V."/>
            <person name="Whittaker C.A."/>
            <person name="Yang X."/>
            <person name="Zimmer A.R."/>
            <person name="Bradley A."/>
            <person name="Hubbard T."/>
            <person name="Birren B.W."/>
            <person name="Rogers J."/>
            <person name="Lander E.S."/>
            <person name="Nusbaum C."/>
        </authorList>
    </citation>
    <scope>NUCLEOTIDE SEQUENCE [LARGE SCALE GENOMIC DNA]</scope>
</reference>
<reference key="3">
    <citation type="journal article" date="2004" name="Genome Res.">
        <title>The status, quality, and expansion of the NIH full-length cDNA project: the Mammalian Gene Collection (MGC).</title>
        <authorList>
            <consortium name="The MGC Project Team"/>
        </authorList>
    </citation>
    <scope>NUCLEOTIDE SEQUENCE [LARGE SCALE MRNA] (ISOFORM 2)</scope>
    <source>
        <tissue>Lymph</tissue>
    </source>
</reference>
<reference key="4">
    <citation type="journal article" date="1999" name="Biochem. Biophys. Res. Commun.">
        <title>Identification of a differentially expressed RNA helicase by gene trapping.</title>
        <authorList>
            <person name="Wagner D.S."/>
            <person name="Gan L."/>
            <person name="Klein W.H."/>
        </authorList>
    </citation>
    <scope>PARTIAL NUCLEOTIDE SEQUENCE [MRNA]</scope>
    <scope>DISCUSSION OF SEQUENCE</scope>
</reference>
<reference key="5">
    <citation type="journal article" date="2003" name="Cancer Lett.">
        <title>Down-regulation in human cancers of DRHC, a novel helicase-like gene from 17q25.1 that inhibits cell growth.</title>
        <authorList>
            <person name="Nagai H."/>
            <person name="Yabe A."/>
            <person name="Mine N."/>
            <person name="Mikami I."/>
            <person name="Fujiwara H."/>
            <person name="Terada Y."/>
            <person name="Hirano A."/>
            <person name="Tsuneizumi M."/>
            <person name="Yokota T."/>
            <person name="Emi M."/>
        </authorList>
    </citation>
    <scope>TISSUE SPECIFICITY</scope>
</reference>
<reference key="6">
    <citation type="journal article" date="2004" name="Nat. Cell Biol.">
        <title>SMYD3 encodes a histone methyltransferase involved in the proliferation of cancer cells.</title>
        <authorList>
            <person name="Hamamoto R."/>
            <person name="Furukawa Y."/>
            <person name="Morita M."/>
            <person name="Iimura Y."/>
            <person name="Silva F.P."/>
            <person name="Li M."/>
            <person name="Yagyu R."/>
            <person name="Nakamura Y."/>
        </authorList>
    </citation>
    <scope>INTERACTION WITH SMYD3 AND POLR2A</scope>
</reference>
<reference key="7">
    <citation type="journal article" date="2008" name="Proc. Natl. Acad. Sci. U.S.A.">
        <title>A quantitative atlas of mitotic phosphorylation.</title>
        <authorList>
            <person name="Dephoure N."/>
            <person name="Zhou C."/>
            <person name="Villen J."/>
            <person name="Beausoleil S.A."/>
            <person name="Bakalarski C.E."/>
            <person name="Elledge S.J."/>
            <person name="Gygi S.P."/>
        </authorList>
    </citation>
    <scope>IDENTIFICATION BY MASS SPECTROMETRY [LARGE SCALE ANALYSIS]</scope>
    <source>
        <tissue>Cervix carcinoma</tissue>
    </source>
</reference>
<reference key="8">
    <citation type="journal article" date="2009" name="Anal. Chem.">
        <title>Lys-N and trypsin cover complementary parts of the phosphoproteome in a refined SCX-based approach.</title>
        <authorList>
            <person name="Gauci S."/>
            <person name="Helbig A.O."/>
            <person name="Slijper M."/>
            <person name="Krijgsveld J."/>
            <person name="Heck A.J."/>
            <person name="Mohammed S."/>
        </authorList>
    </citation>
    <scope>IDENTIFICATION BY MASS SPECTROMETRY [LARGE SCALE ANALYSIS]</scope>
</reference>
<reference key="9">
    <citation type="journal article" date="2009" name="Sci. Signal.">
        <title>Quantitative phosphoproteomic analysis of T cell receptor signaling reveals system-wide modulation of protein-protein interactions.</title>
        <authorList>
            <person name="Mayya V."/>
            <person name="Lundgren D.H."/>
            <person name="Hwang S.-I."/>
            <person name="Rezaul K."/>
            <person name="Wu L."/>
            <person name="Eng J.K."/>
            <person name="Rodionov V."/>
            <person name="Han D.K."/>
        </authorList>
    </citation>
    <scope>PHOSPHORYLATION [LARGE SCALE ANALYSIS] AT SER-1738 AND SER-1766</scope>
    <scope>IDENTIFICATION BY MASS SPECTROMETRY [LARGE SCALE ANALYSIS]</scope>
    <source>
        <tissue>Leukemic T-cell</tissue>
    </source>
</reference>
<reference key="10">
    <citation type="journal article" date="2010" name="Sci. Signal.">
        <title>Quantitative phosphoproteomics reveals widespread full phosphorylation site occupancy during mitosis.</title>
        <authorList>
            <person name="Olsen J.V."/>
            <person name="Vermeulen M."/>
            <person name="Santamaria A."/>
            <person name="Kumar C."/>
            <person name="Miller M.L."/>
            <person name="Jensen L.J."/>
            <person name="Gnad F."/>
            <person name="Cox J."/>
            <person name="Jensen T.S."/>
            <person name="Nigg E.A."/>
            <person name="Brunak S."/>
            <person name="Mann M."/>
        </authorList>
    </citation>
    <scope>IDENTIFICATION BY MASS SPECTROMETRY [LARGE SCALE ANALYSIS]</scope>
    <source>
        <tissue>Cervix carcinoma</tissue>
    </source>
</reference>
<reference key="11">
    <citation type="journal article" date="2011" name="BMC Syst. Biol.">
        <title>Initial characterization of the human central proteome.</title>
        <authorList>
            <person name="Burkard T.R."/>
            <person name="Planyavsky M."/>
            <person name="Kaupe I."/>
            <person name="Breitwieser F.P."/>
            <person name="Buerckstuemmer T."/>
            <person name="Bennett K.L."/>
            <person name="Superti-Furga G."/>
            <person name="Colinge J."/>
        </authorList>
    </citation>
    <scope>IDENTIFICATION BY MASS SPECTROMETRY [LARGE SCALE ANALYSIS]</scope>
</reference>
<reference key="12">
    <citation type="journal article" date="2011" name="Sci. Signal.">
        <title>System-wide temporal characterization of the proteome and phosphoproteome of human embryonic stem cell differentiation.</title>
        <authorList>
            <person name="Rigbolt K.T."/>
            <person name="Prokhorova T.A."/>
            <person name="Akimov V."/>
            <person name="Henningsen J."/>
            <person name="Johansen P.T."/>
            <person name="Kratchmarova I."/>
            <person name="Kassem M."/>
            <person name="Mann M."/>
            <person name="Olsen J.V."/>
            <person name="Blagoev B."/>
        </authorList>
    </citation>
    <scope>PHOSPHORYLATION [LARGE SCALE ANALYSIS] AT SER-1614</scope>
    <scope>IDENTIFICATION BY MASS SPECTROMETRY [LARGE SCALE ANALYSIS]</scope>
</reference>
<reference key="13">
    <citation type="journal article" date="2013" name="J. Proteome Res.">
        <title>Toward a comprehensive characterization of a human cancer cell phosphoproteome.</title>
        <authorList>
            <person name="Zhou H."/>
            <person name="Di Palma S."/>
            <person name="Preisinger C."/>
            <person name="Peng M."/>
            <person name="Polat A.N."/>
            <person name="Heck A.J."/>
            <person name="Mohammed S."/>
        </authorList>
    </citation>
    <scope>PHOSPHORYLATION [LARGE SCALE ANALYSIS] AT SER-248; THR-1163; SER-1614; SER-1645; SER-1738 AND SER-1741</scope>
    <scope>IDENTIFICATION BY MASS SPECTROMETRY [LARGE SCALE ANALYSIS]</scope>
    <source>
        <tissue>Cervix carcinoma</tissue>
        <tissue>Erythroleukemia</tissue>
    </source>
</reference>
<reference key="14">
    <citation type="journal article" date="2014" name="J. Proteomics">
        <title>An enzyme assisted RP-RPLC approach for in-depth analysis of human liver phosphoproteome.</title>
        <authorList>
            <person name="Bian Y."/>
            <person name="Song C."/>
            <person name="Cheng K."/>
            <person name="Dong M."/>
            <person name="Wang F."/>
            <person name="Huang J."/>
            <person name="Sun D."/>
            <person name="Wang L."/>
            <person name="Ye M."/>
            <person name="Zou H."/>
        </authorList>
    </citation>
    <scope>IDENTIFICATION BY MASS SPECTROMETRY [LARGE SCALE ANALYSIS]</scope>
    <source>
        <tissue>Liver</tissue>
    </source>
</reference>
<reference key="15">
    <citation type="journal article" date="2014" name="Mol. Cell. Proteomics">
        <title>Immunoaffinity enrichment and mass spectrometry analysis of protein methylation.</title>
        <authorList>
            <person name="Guo A."/>
            <person name="Gu H."/>
            <person name="Zhou J."/>
            <person name="Mulhern D."/>
            <person name="Wang Y."/>
            <person name="Lee K.A."/>
            <person name="Yang V."/>
            <person name="Aguiar M."/>
            <person name="Kornhauser J."/>
            <person name="Jia X."/>
            <person name="Ren J."/>
            <person name="Beausoleil S.A."/>
            <person name="Silva J.C."/>
            <person name="Vemulapalli V."/>
            <person name="Bedford M.T."/>
            <person name="Comb M.J."/>
        </authorList>
    </citation>
    <scope>METHYLATION [LARGE SCALE ANALYSIS] AT ARG-1245</scope>
    <scope>IDENTIFICATION BY MASS SPECTROMETRY [LARGE SCALE ANALYSIS]</scope>
    <source>
        <tissue>Colon carcinoma</tissue>
    </source>
</reference>
<dbReference type="EC" id="3.6.4.-"/>
<dbReference type="EMBL" id="D29677">
    <property type="protein sequence ID" value="BAA06147.3"/>
    <property type="status" value="ALT_INIT"/>
    <property type="molecule type" value="mRNA"/>
</dbReference>
<dbReference type="EMBL" id="AC005544">
    <property type="status" value="NOT_ANNOTATED_CDS"/>
    <property type="molecule type" value="Genomic_DNA"/>
</dbReference>
<dbReference type="EMBL" id="AC007448">
    <property type="status" value="NOT_ANNOTATED_CDS"/>
    <property type="molecule type" value="Genomic_DNA"/>
</dbReference>
<dbReference type="EMBL" id="BC094881">
    <property type="protein sequence ID" value="AAH94881.1"/>
    <property type="molecule type" value="mRNA"/>
</dbReference>
<dbReference type="CCDS" id="CCDS42374.1">
    <molecule id="P42694-1"/>
</dbReference>
<dbReference type="RefSeq" id="NP_055692.2">
    <molecule id="P42694-1"/>
    <property type="nucleotide sequence ID" value="NM_014877.3"/>
</dbReference>
<dbReference type="RefSeq" id="XP_047293181.1">
    <molecule id="P42694-1"/>
    <property type="nucleotide sequence ID" value="XM_047437225.1"/>
</dbReference>
<dbReference type="SMR" id="P42694"/>
<dbReference type="DIP" id="DIP-39352N"/>
<dbReference type="FunCoup" id="P42694">
    <property type="interactions" value="1891"/>
</dbReference>
<dbReference type="IntAct" id="P42694">
    <property type="interactions" value="107"/>
</dbReference>
<dbReference type="MINT" id="P42694"/>
<dbReference type="STRING" id="9606.ENSP00000464512"/>
<dbReference type="GlyGen" id="P42694">
    <property type="glycosylation" value="6 sites, 2 N-linked glycans (2 sites), 1 O-linked glycan (4 sites)"/>
</dbReference>
<dbReference type="iPTMnet" id="P42694"/>
<dbReference type="PhosphoSitePlus" id="P42694"/>
<dbReference type="BioMuta" id="HELZ"/>
<dbReference type="DMDM" id="221222452"/>
<dbReference type="jPOST" id="P42694"/>
<dbReference type="MassIVE" id="P42694"/>
<dbReference type="PaxDb" id="9606-ENSP00000351524"/>
<dbReference type="PeptideAtlas" id="P42694"/>
<dbReference type="ProteomicsDB" id="55539">
    <molecule id="P42694-1"/>
</dbReference>
<dbReference type="Pumba" id="P42694"/>
<dbReference type="Antibodypedia" id="31693">
    <property type="antibodies" value="89 antibodies from 13 providers"/>
</dbReference>
<dbReference type="DNASU" id="9931"/>
<dbReference type="Ensembl" id="ENST00000358691.10">
    <molecule id="P42694-1"/>
    <property type="protein sequence ID" value="ENSP00000351524.5"/>
    <property type="gene ID" value="ENSG00000198265.12"/>
</dbReference>
<dbReference type="Ensembl" id="ENST00000579953.5">
    <molecule id="P42694-2"/>
    <property type="protein sequence ID" value="ENSP00000463727.1"/>
    <property type="gene ID" value="ENSG00000198265.12"/>
</dbReference>
<dbReference type="GeneID" id="9931"/>
<dbReference type="KEGG" id="hsa:9931"/>
<dbReference type="MANE-Select" id="ENST00000358691.10">
    <property type="protein sequence ID" value="ENSP00000351524.5"/>
    <property type="RefSeq nucleotide sequence ID" value="NM_014877.4"/>
    <property type="RefSeq protein sequence ID" value="NP_055692.3"/>
</dbReference>
<dbReference type="UCSC" id="uc002jfx.5">
    <molecule id="P42694-1"/>
    <property type="organism name" value="human"/>
</dbReference>
<dbReference type="AGR" id="HGNC:16878"/>
<dbReference type="CTD" id="9931"/>
<dbReference type="DisGeNET" id="9931"/>
<dbReference type="GeneCards" id="HELZ"/>
<dbReference type="HGNC" id="HGNC:16878">
    <property type="gene designation" value="HELZ"/>
</dbReference>
<dbReference type="HPA" id="ENSG00000198265">
    <property type="expression patterns" value="Low tissue specificity"/>
</dbReference>
<dbReference type="MalaCards" id="HELZ"/>
<dbReference type="MIM" id="606699">
    <property type="type" value="gene"/>
</dbReference>
<dbReference type="neXtProt" id="NX_P42694"/>
<dbReference type="OpenTargets" id="ENSG00000198265"/>
<dbReference type="VEuPathDB" id="HostDB:ENSG00000198265"/>
<dbReference type="eggNOG" id="KOG1804">
    <property type="taxonomic scope" value="Eukaryota"/>
</dbReference>
<dbReference type="GeneTree" id="ENSGT00940000156686"/>
<dbReference type="HOGENOM" id="CLU_001451_0_0_1"/>
<dbReference type="InParanoid" id="P42694"/>
<dbReference type="OMA" id="GQEPFHS"/>
<dbReference type="OrthoDB" id="5988104at2759"/>
<dbReference type="PAN-GO" id="P42694">
    <property type="GO annotations" value="4 GO annotations based on evolutionary models"/>
</dbReference>
<dbReference type="PhylomeDB" id="P42694"/>
<dbReference type="TreeFam" id="TF323999"/>
<dbReference type="PathwayCommons" id="P42694"/>
<dbReference type="SignaLink" id="P42694"/>
<dbReference type="BioGRID-ORCS" id="9931">
    <property type="hits" value="34 hits in 1163 CRISPR screens"/>
</dbReference>
<dbReference type="CD-CODE" id="232F8A39">
    <property type="entry name" value="P-body"/>
</dbReference>
<dbReference type="CD-CODE" id="DEE660B4">
    <property type="entry name" value="Stress granule"/>
</dbReference>
<dbReference type="ChiTaRS" id="HELZ">
    <property type="organism name" value="human"/>
</dbReference>
<dbReference type="GenomeRNAi" id="9931"/>
<dbReference type="Pharos" id="P42694">
    <property type="development level" value="Tbio"/>
</dbReference>
<dbReference type="PRO" id="PR:P42694"/>
<dbReference type="Proteomes" id="UP000005640">
    <property type="component" value="Chromosome 17"/>
</dbReference>
<dbReference type="RNAct" id="P42694">
    <property type="molecule type" value="protein"/>
</dbReference>
<dbReference type="Bgee" id="ENSG00000198265">
    <property type="expression patterns" value="Expressed in colonic epithelium and 213 other cell types or tissues"/>
</dbReference>
<dbReference type="ExpressionAtlas" id="P42694">
    <property type="expression patterns" value="baseline and differential"/>
</dbReference>
<dbReference type="GO" id="GO:0005829">
    <property type="term" value="C:cytosol"/>
    <property type="evidence" value="ECO:0000318"/>
    <property type="project" value="GO_Central"/>
</dbReference>
<dbReference type="GO" id="GO:0016020">
    <property type="term" value="C:membrane"/>
    <property type="evidence" value="ECO:0007005"/>
    <property type="project" value="UniProtKB"/>
</dbReference>
<dbReference type="GO" id="GO:0005634">
    <property type="term" value="C:nucleus"/>
    <property type="evidence" value="ECO:0007669"/>
    <property type="project" value="UniProtKB-SubCell"/>
</dbReference>
<dbReference type="GO" id="GO:0043186">
    <property type="term" value="C:P granule"/>
    <property type="evidence" value="ECO:0000318"/>
    <property type="project" value="GO_Central"/>
</dbReference>
<dbReference type="GO" id="GO:0005524">
    <property type="term" value="F:ATP binding"/>
    <property type="evidence" value="ECO:0007669"/>
    <property type="project" value="UniProtKB-KW"/>
</dbReference>
<dbReference type="GO" id="GO:0004386">
    <property type="term" value="F:helicase activity"/>
    <property type="evidence" value="ECO:0007669"/>
    <property type="project" value="UniProtKB-KW"/>
</dbReference>
<dbReference type="GO" id="GO:0016787">
    <property type="term" value="F:hydrolase activity"/>
    <property type="evidence" value="ECO:0007669"/>
    <property type="project" value="UniProtKB-KW"/>
</dbReference>
<dbReference type="GO" id="GO:0003723">
    <property type="term" value="F:RNA binding"/>
    <property type="evidence" value="ECO:0007005"/>
    <property type="project" value="UniProtKB"/>
</dbReference>
<dbReference type="GO" id="GO:0008270">
    <property type="term" value="F:zinc ion binding"/>
    <property type="evidence" value="ECO:0007669"/>
    <property type="project" value="UniProtKB-KW"/>
</dbReference>
<dbReference type="GO" id="GO:0035194">
    <property type="term" value="P:regulatory ncRNA-mediated post-transcriptional gene silencing"/>
    <property type="evidence" value="ECO:0000318"/>
    <property type="project" value="GO_Central"/>
</dbReference>
<dbReference type="CDD" id="cd18077">
    <property type="entry name" value="DEXXQc_HELZ"/>
    <property type="match status" value="1"/>
</dbReference>
<dbReference type="CDD" id="cd18808">
    <property type="entry name" value="SF1_C_Upf1"/>
    <property type="match status" value="1"/>
</dbReference>
<dbReference type="FunFam" id="3.40.50.300:FF:000419">
    <property type="entry name" value="Probable helicase with zinc finger domain"/>
    <property type="match status" value="1"/>
</dbReference>
<dbReference type="FunFam" id="3.40.50.300:FF:000453">
    <property type="entry name" value="Probable helicase with zinc finger domain"/>
    <property type="match status" value="1"/>
</dbReference>
<dbReference type="FunFam" id="4.10.1000.10:FF:000009">
    <property type="entry name" value="probable helicase with zinc finger domain"/>
    <property type="match status" value="1"/>
</dbReference>
<dbReference type="Gene3D" id="3.40.50.300">
    <property type="entry name" value="P-loop containing nucleotide triphosphate hydrolases"/>
    <property type="match status" value="2"/>
</dbReference>
<dbReference type="Gene3D" id="4.10.1000.10">
    <property type="entry name" value="Zinc finger, CCCH-type"/>
    <property type="match status" value="1"/>
</dbReference>
<dbReference type="InterPro" id="IPR045055">
    <property type="entry name" value="DNA2/NAM7-like"/>
</dbReference>
<dbReference type="InterPro" id="IPR041679">
    <property type="entry name" value="DNA2/NAM7-like_C"/>
</dbReference>
<dbReference type="InterPro" id="IPR041677">
    <property type="entry name" value="DNA2/NAM7_AAA_11"/>
</dbReference>
<dbReference type="InterPro" id="IPR049569">
    <property type="entry name" value="HELZ_DEAD-box_1"/>
</dbReference>
<dbReference type="InterPro" id="IPR027417">
    <property type="entry name" value="P-loop_NTPase"/>
</dbReference>
<dbReference type="InterPro" id="IPR047187">
    <property type="entry name" value="SF1_C_Upf1"/>
</dbReference>
<dbReference type="InterPro" id="IPR014016">
    <property type="entry name" value="UvrD-like_ATP-bd"/>
</dbReference>
<dbReference type="InterPro" id="IPR000571">
    <property type="entry name" value="Znf_CCCH"/>
</dbReference>
<dbReference type="InterPro" id="IPR036855">
    <property type="entry name" value="Znf_CCCH_sf"/>
</dbReference>
<dbReference type="PANTHER" id="PTHR10887">
    <property type="entry name" value="DNA2/NAM7 HELICASE FAMILY"/>
    <property type="match status" value="1"/>
</dbReference>
<dbReference type="PANTHER" id="PTHR10887:SF365">
    <property type="entry name" value="HELICASE WITH ZINC FINGER DOMAIN-RELATED"/>
    <property type="match status" value="1"/>
</dbReference>
<dbReference type="Pfam" id="PF13086">
    <property type="entry name" value="AAA_11"/>
    <property type="match status" value="1"/>
</dbReference>
<dbReference type="Pfam" id="PF13087">
    <property type="entry name" value="AAA_12"/>
    <property type="match status" value="1"/>
</dbReference>
<dbReference type="Pfam" id="PF00580">
    <property type="entry name" value="UvrD-helicase"/>
    <property type="match status" value="1"/>
</dbReference>
<dbReference type="Pfam" id="PF00642">
    <property type="entry name" value="zf-CCCH"/>
    <property type="match status" value="1"/>
</dbReference>
<dbReference type="SMART" id="SM00356">
    <property type="entry name" value="ZnF_C3H1"/>
    <property type="match status" value="1"/>
</dbReference>
<dbReference type="SUPFAM" id="SSF90229">
    <property type="entry name" value="CCCH zinc finger"/>
    <property type="match status" value="1"/>
</dbReference>
<dbReference type="SUPFAM" id="SSF52540">
    <property type="entry name" value="P-loop containing nucleoside triphosphate hydrolases"/>
    <property type="match status" value="1"/>
</dbReference>
<dbReference type="PROSITE" id="PS50103">
    <property type="entry name" value="ZF_C3H1"/>
    <property type="match status" value="1"/>
</dbReference>
<sequence>MEDRRAEKSCEQACESLKRQDYEMALKHCTEALLSLGQYSMADFTGPCPLEIERIKIESLLYRIASFLQLKNYVQADEDCRHVLGEGLAKGEDAFRAVLCCMQLKGKLQPVSTILAKSLTGESLNGMVTKDLTRLKTLLSETETATSNALSGYHVEDLDEGSCNGWHFRPPPRGITSSEEYTLCKRFLEQGICRYGAQCTSAHSQEELAEWQKRYASRLIKLKQQNENKQLSGSYMETLIEKWMNSLSPEKVLSECIEGVKVEHNPDLSVTVSTKKSHQTWTFALTCKPARMLYRVALLYDAHRPHFSIIAISAGDSTTQVSQEVPENCQEWIGGKMAQNGLDHYVYKVGIAFNTEIFGTFRQTIVFDFGLEPVLMQRVMIDAASTEDLEYLMHAKQQLVTTAKRWDSSSKTIIDFEPNETTDLEKSLLIRYQIPLSADQLFTQSVLDKSLTKSNYQSRLHDLLYIEEIAQYKEISKFNLKVQLQILASFMLTGVSGGAKYAQNGQLFGRFKLTETLSEDTLAGRLVMTKVNAVYLLPVPKQKLVQTQGTKEKVYEATIEEKTKEYIFLRLSRECCEELNLRPDCDTQVELQFQLNRLPLCEMHYALDRIKDNGVLFPDISMTPTIPWSPNRQWDEQLDPRLNAKQKEAVLAITTPLAIQLPPVLIIGPYGTGKTFTLAQAVKHILQQQETRILICTHSNSAADLYIKDYLHPYVEAGNPQARPLRVYFRNRWVKTVHPVVHQYCLISSAHSTFQMPQKEDILKHRVVVVTLNTSQYLCQLDLEPGFFTHILLDEAAQAMECETIMPLALATQNTRIVLAGDHMQLSPFVYSEFARERNLHVSLLDRLYEHYPAEFPCRILLCENYRSHEAIINYTSELFYEGKLMASGKQPAHKDFYPLTFFTARGEDVQEKNSTAFYNNAEVFEVVERVEELRRKWPVAWGKLDDGSIGVVTPYADQVFRIRAELRKKRLSDVNVERVLNVQGKQFRVLFLSTVRTRHTCKHKQTPIKKKEQLLEDSTEDLDYGFLSNYKLLNTAITRAQSLVAVVGDPIALCSIGRCRKFWERFIALCHENSSLHGITFEQIKAQLEALELKKTYVLNPLAPEFIPRALRLQHSGSTNKQQQSPPKGKSLHHTQNDHFQNDGIVQPNPSVLIGNPIRAYTPPPPLGPHPNLGKSPSPVQRIDPHTGTSILYVPAVYGGNVVMSVPLPVPWTGYQGRFAVDPRIITHQAAMAYNMNLLQTHGRGSPIPYGLGHHPPVTIGQPQNQHQEKDQHEQNRNGKSDTNNSGPEINKIRTPEKKPTEPKQVDLESNPQNRSPESRPSVVYPSTKFPRKDNLNPRHINLPLPAPHAQYAIPNRHFHPLPQLPRPPFPIPQQHTLLNQQQNNLPEQPNQIPPQPNQVVQQQSQLNQQPQQPPPQLSPAYQAGPNNAFFNSAVAHRPQSPPAEAVIPEQQPPPMLQEGHSPLRAIAQPGPILPSHLNSFIDENPSGLPIGEALDRIHGSVALETLRQQQARFQQWSEHHAFLSQGSAPYPHHHHPHLQHLPQPPLGLHQPPVRADWKLTSSAEDEVETTYSRFQDLIRELSHRDQSETRELAEMPPPQSRLLQYRQVQSRSPPAVPSPPSSTDHSSHFSNFNDNSRDIEVASNPAFPQRLPPQIFNSPFSLPSEHLAPPPLKYLAPDGAWTFANLQQNHLMGPGFPYGLPPLPHRPPQNPFVQIQNHQHAIGQEPFHPLSSRTVSSSSLPSLEEYEPRGPGRPLYQRRISSSSVQPCSEEVSTPQDSLAQCKELQDHSNQSSFNFSSPESWVNTTSSTPYQNIPCNGSSRTAQPRELIAPPKTVKPPEDQLKSENLEVSSSFNYSVLQHLGQFPPLMPNKQIAESANSSSPQSSAGGKPAMSYASALRAPPKPRPPPEQAKKSSDPLSLFQELSLGSSSGSNGFYSYFK</sequence>